<feature type="chain" id="PRO_1000148809" description="Undecaprenyl-diphosphatase">
    <location>
        <begin position="1"/>
        <end position="265"/>
    </location>
</feature>
<feature type="transmembrane region" description="Helical" evidence="1">
    <location>
        <begin position="42"/>
        <end position="62"/>
    </location>
</feature>
<feature type="transmembrane region" description="Helical" evidence="1">
    <location>
        <begin position="82"/>
        <end position="102"/>
    </location>
</feature>
<feature type="transmembrane region" description="Helical" evidence="1">
    <location>
        <begin position="108"/>
        <end position="128"/>
    </location>
</feature>
<feature type="transmembrane region" description="Helical" evidence="1">
    <location>
        <begin position="157"/>
        <end position="177"/>
    </location>
</feature>
<feature type="transmembrane region" description="Helical" evidence="1">
    <location>
        <begin position="181"/>
        <end position="201"/>
    </location>
</feature>
<feature type="transmembrane region" description="Helical" evidence="1">
    <location>
        <begin position="217"/>
        <end position="237"/>
    </location>
</feature>
<feature type="transmembrane region" description="Helical" evidence="1">
    <location>
        <begin position="244"/>
        <end position="264"/>
    </location>
</feature>
<organism>
    <name type="scientific">Desulfovibrio desulfuricans (strain ATCC 27774 / DSM 6949 / MB)</name>
    <dbReference type="NCBI Taxonomy" id="525146"/>
    <lineage>
        <taxon>Bacteria</taxon>
        <taxon>Pseudomonadati</taxon>
        <taxon>Thermodesulfobacteriota</taxon>
        <taxon>Desulfovibrionia</taxon>
        <taxon>Desulfovibrionales</taxon>
        <taxon>Desulfovibrionaceae</taxon>
        <taxon>Desulfovibrio</taxon>
    </lineage>
</organism>
<accession>B8J0P3</accession>
<dbReference type="EC" id="3.6.1.27" evidence="1"/>
<dbReference type="EMBL" id="CP001358">
    <property type="protein sequence ID" value="ACL49320.1"/>
    <property type="molecule type" value="Genomic_DNA"/>
</dbReference>
<dbReference type="SMR" id="B8J0P3"/>
<dbReference type="STRING" id="525146.Ddes_1418"/>
<dbReference type="KEGG" id="dds:Ddes_1418"/>
<dbReference type="eggNOG" id="COG1968">
    <property type="taxonomic scope" value="Bacteria"/>
</dbReference>
<dbReference type="HOGENOM" id="CLU_060296_2_0_7"/>
<dbReference type="GO" id="GO:0005886">
    <property type="term" value="C:plasma membrane"/>
    <property type="evidence" value="ECO:0007669"/>
    <property type="project" value="UniProtKB-SubCell"/>
</dbReference>
<dbReference type="GO" id="GO:0050380">
    <property type="term" value="F:undecaprenyl-diphosphatase activity"/>
    <property type="evidence" value="ECO:0007669"/>
    <property type="project" value="UniProtKB-UniRule"/>
</dbReference>
<dbReference type="GO" id="GO:0071555">
    <property type="term" value="P:cell wall organization"/>
    <property type="evidence" value="ECO:0007669"/>
    <property type="project" value="UniProtKB-KW"/>
</dbReference>
<dbReference type="GO" id="GO:0009252">
    <property type="term" value="P:peptidoglycan biosynthetic process"/>
    <property type="evidence" value="ECO:0007669"/>
    <property type="project" value="UniProtKB-KW"/>
</dbReference>
<dbReference type="GO" id="GO:0008360">
    <property type="term" value="P:regulation of cell shape"/>
    <property type="evidence" value="ECO:0007669"/>
    <property type="project" value="UniProtKB-KW"/>
</dbReference>
<dbReference type="GO" id="GO:0046677">
    <property type="term" value="P:response to antibiotic"/>
    <property type="evidence" value="ECO:0007669"/>
    <property type="project" value="UniProtKB-UniRule"/>
</dbReference>
<dbReference type="HAMAP" id="MF_01006">
    <property type="entry name" value="Undec_diphosphatase"/>
    <property type="match status" value="1"/>
</dbReference>
<dbReference type="InterPro" id="IPR003824">
    <property type="entry name" value="UppP"/>
</dbReference>
<dbReference type="NCBIfam" id="NF001389">
    <property type="entry name" value="PRK00281.1-2"/>
    <property type="match status" value="1"/>
</dbReference>
<dbReference type="NCBIfam" id="NF001390">
    <property type="entry name" value="PRK00281.1-4"/>
    <property type="match status" value="1"/>
</dbReference>
<dbReference type="NCBIfam" id="TIGR00753">
    <property type="entry name" value="undec_PP_bacA"/>
    <property type="match status" value="1"/>
</dbReference>
<dbReference type="PANTHER" id="PTHR30622">
    <property type="entry name" value="UNDECAPRENYL-DIPHOSPHATASE"/>
    <property type="match status" value="1"/>
</dbReference>
<dbReference type="PANTHER" id="PTHR30622:SF3">
    <property type="entry name" value="UNDECAPRENYL-DIPHOSPHATASE"/>
    <property type="match status" value="1"/>
</dbReference>
<dbReference type="Pfam" id="PF02673">
    <property type="entry name" value="BacA"/>
    <property type="match status" value="1"/>
</dbReference>
<keyword id="KW-0046">Antibiotic resistance</keyword>
<keyword id="KW-0997">Cell inner membrane</keyword>
<keyword id="KW-1003">Cell membrane</keyword>
<keyword id="KW-0133">Cell shape</keyword>
<keyword id="KW-0961">Cell wall biogenesis/degradation</keyword>
<keyword id="KW-0378">Hydrolase</keyword>
<keyword id="KW-0472">Membrane</keyword>
<keyword id="KW-0573">Peptidoglycan synthesis</keyword>
<keyword id="KW-0812">Transmembrane</keyword>
<keyword id="KW-1133">Transmembrane helix</keyword>
<gene>
    <name evidence="1" type="primary">uppP</name>
    <name type="ordered locus">Ddes_1418</name>
</gene>
<protein>
    <recommendedName>
        <fullName evidence="1">Undecaprenyl-diphosphatase</fullName>
        <ecNumber evidence="1">3.6.1.27</ecNumber>
    </recommendedName>
    <alternativeName>
        <fullName evidence="1">Bacitracin resistance protein</fullName>
    </alternativeName>
    <alternativeName>
        <fullName evidence="1">Undecaprenyl pyrophosphate phosphatase</fullName>
    </alternativeName>
</protein>
<comment type="function">
    <text evidence="1">Catalyzes the dephosphorylation of undecaprenyl diphosphate (UPP). Confers resistance to bacitracin.</text>
</comment>
<comment type="catalytic activity">
    <reaction evidence="1">
        <text>di-trans,octa-cis-undecaprenyl diphosphate + H2O = di-trans,octa-cis-undecaprenyl phosphate + phosphate + H(+)</text>
        <dbReference type="Rhea" id="RHEA:28094"/>
        <dbReference type="ChEBI" id="CHEBI:15377"/>
        <dbReference type="ChEBI" id="CHEBI:15378"/>
        <dbReference type="ChEBI" id="CHEBI:43474"/>
        <dbReference type="ChEBI" id="CHEBI:58405"/>
        <dbReference type="ChEBI" id="CHEBI:60392"/>
        <dbReference type="EC" id="3.6.1.27"/>
    </reaction>
</comment>
<comment type="subcellular location">
    <subcellularLocation>
        <location evidence="1">Cell inner membrane</location>
        <topology evidence="1">Multi-pass membrane protein</topology>
    </subcellularLocation>
</comment>
<comment type="miscellaneous">
    <text>Bacitracin is thought to be involved in the inhibition of peptidoglycan synthesis by sequestering undecaprenyl diphosphate, thereby reducing the pool of lipid carrier available.</text>
</comment>
<comment type="similarity">
    <text evidence="1">Belongs to the UppP family.</text>
</comment>
<proteinExistence type="inferred from homology"/>
<sequence length="265" mass="28826">MDNLLTALILSIVEGLTEFLPVSSSGHLILAGDLLGFVGEKAATFDVVIQLGAIMAVVVLYWKRFWGLVRPQPYARFAGRRGIVLLMLTSLPACILGLLLHAYIKEYLFRPATVLIALVVGAICMILVEKRKFKPTCISLDDMTPRLALGIGCFQCLALWPGFSRSAATIMGGMLLGAKRPLAAEYSFIAAVPIMVAATGYDLLKNLSMFTAADIPFFLVGMIGSFVSALLAVKVFVALVGRMTLIPFACYRLLIAPFVYYFMVN</sequence>
<name>UPPP_DESDA</name>
<reference key="1">
    <citation type="submission" date="2009-01" db="EMBL/GenBank/DDBJ databases">
        <title>Complete sequence of Desulfovibrio desulfuricans subsp. desulfuricans str. ATCC 27774.</title>
        <authorList>
            <consortium name="US DOE Joint Genome Institute"/>
            <person name="Lucas S."/>
            <person name="Copeland A."/>
            <person name="Lapidus A."/>
            <person name="Glavina del Rio T."/>
            <person name="Tice H."/>
            <person name="Bruce D."/>
            <person name="Goodwin L."/>
            <person name="Pitluck S."/>
            <person name="Sims D."/>
            <person name="Lu M."/>
            <person name="Kiss H."/>
            <person name="Meineke L."/>
            <person name="Brettin T."/>
            <person name="Detter J.C."/>
            <person name="Han C."/>
            <person name="Larimer F."/>
            <person name="Land M."/>
            <person name="Hauser L."/>
            <person name="Kyrpides N."/>
            <person name="Ovchinnikova G."/>
            <person name="Hazen T.C."/>
        </authorList>
    </citation>
    <scope>NUCLEOTIDE SEQUENCE [LARGE SCALE GENOMIC DNA]</scope>
    <source>
        <strain>ATCC 27774 / DSM 6949 / MB</strain>
    </source>
</reference>
<evidence type="ECO:0000255" key="1">
    <source>
        <dbReference type="HAMAP-Rule" id="MF_01006"/>
    </source>
</evidence>